<evidence type="ECO:0000250" key="1"/>
<evidence type="ECO:0000250" key="2">
    <source>
        <dbReference type="UniProtKB" id="P9WIN5"/>
    </source>
</evidence>
<evidence type="ECO:0000305" key="3"/>
<feature type="chain" id="PRO_0000332105" description="Phthiocerol/phthiodiolone dimycocerosyl transferase">
    <location>
        <begin position="1"/>
        <end position="410"/>
    </location>
</feature>
<feature type="active site" description="Proton acceptor" evidence="1">
    <location>
        <position position="118"/>
    </location>
</feature>
<feature type="site" description="Structural role in the organization of the active site" evidence="1">
    <location>
        <position position="122"/>
    </location>
</feature>
<reference key="1">
    <citation type="submission" date="2007-02" db="EMBL/GenBank/DDBJ databases">
        <title>Complete sequence of Mycobacterium sp. JLS.</title>
        <authorList>
            <consortium name="US DOE Joint Genome Institute"/>
            <person name="Copeland A."/>
            <person name="Lucas S."/>
            <person name="Lapidus A."/>
            <person name="Barry K."/>
            <person name="Detter J.C."/>
            <person name="Glavina del Rio T."/>
            <person name="Hammon N."/>
            <person name="Israni S."/>
            <person name="Dalin E."/>
            <person name="Tice H."/>
            <person name="Pitluck S."/>
            <person name="Chain P."/>
            <person name="Malfatti S."/>
            <person name="Shin M."/>
            <person name="Vergez L."/>
            <person name="Schmutz J."/>
            <person name="Larimer F."/>
            <person name="Land M."/>
            <person name="Hauser L."/>
            <person name="Kyrpides N."/>
            <person name="Mikhailova N."/>
            <person name="Miller C.D."/>
            <person name="Anderson A.J."/>
            <person name="Sims R.C."/>
            <person name="Richardson P."/>
        </authorList>
    </citation>
    <scope>NUCLEOTIDE SEQUENCE [LARGE SCALE GENOMIC DNA]</scope>
    <source>
        <strain>JLS</strain>
    </source>
</reference>
<sequence length="410" mass="44501">MAYSTSVIRRLAPSEKFFAETQTFTSITVLLDGTVDIDAMADAFDALLEAYPVYAGHLEPDSDGGFELVADDLLHPGLWVQFEGDPAPTDQLDQGVALIYLLVKPDSTPVEVTLFIHHSLADGTHMAGLLFELFARYTEVVTTGSAGPVSPNPAPEPIETVLEQRGIRKQQRSGLDRFIPAMFAYELPPKRVTTRSAAERPAAVPTTRCRLSKAETSSLVKYGRVNRLFVNNLISAAILLAEWQVRRTPHIPIPYVYNVNLRALVEPPVSATGCTLAIGVATYLAHITPQTTMVELARGIADMFQADLADGVVQQSLLHFNMQYEGAIPGLPDVVLSTNLGNAVAMSTPPGLEVVGVQSQFYRASSAVIDVYSFGVVGGELLIEHHVDAAETTIDLIRSLLRSVVSEHQH</sequence>
<dbReference type="EC" id="2.3.1.282" evidence="2"/>
<dbReference type="EMBL" id="CP000580">
    <property type="protein sequence ID" value="ABN98637.1"/>
    <property type="molecule type" value="Genomic_DNA"/>
</dbReference>
<dbReference type="SMR" id="A3Q0G0"/>
<dbReference type="KEGG" id="mjl:Mjls_2857"/>
<dbReference type="HOGENOM" id="CLU_050374_1_0_11"/>
<dbReference type="BioCyc" id="MSP164757:G1G8C-2875-MONOMER"/>
<dbReference type="GO" id="GO:0016746">
    <property type="term" value="F:acyltransferase activity"/>
    <property type="evidence" value="ECO:0007669"/>
    <property type="project" value="UniProtKB-KW"/>
</dbReference>
<dbReference type="GO" id="GO:0006629">
    <property type="term" value="P:lipid metabolic process"/>
    <property type="evidence" value="ECO:0007669"/>
    <property type="project" value="UniProtKB-KW"/>
</dbReference>
<dbReference type="Gene3D" id="3.30.559.10">
    <property type="entry name" value="Chloramphenicol acetyltransferase-like domain"/>
    <property type="match status" value="1"/>
</dbReference>
<dbReference type="Gene3D" id="3.30.559.30">
    <property type="entry name" value="Nonribosomal peptide synthetase, condensation domain"/>
    <property type="match status" value="1"/>
</dbReference>
<dbReference type="InterPro" id="IPR023213">
    <property type="entry name" value="CAT-like_dom_sf"/>
</dbReference>
<dbReference type="InterPro" id="IPR031641">
    <property type="entry name" value="PapA_C"/>
</dbReference>
<dbReference type="NCBIfam" id="NF006789">
    <property type="entry name" value="PRK09294.1-3"/>
    <property type="match status" value="1"/>
</dbReference>
<dbReference type="Pfam" id="PF16911">
    <property type="entry name" value="PapA_C"/>
    <property type="match status" value="1"/>
</dbReference>
<dbReference type="SUPFAM" id="SSF52777">
    <property type="entry name" value="CoA-dependent acyltransferases"/>
    <property type="match status" value="2"/>
</dbReference>
<protein>
    <recommendedName>
        <fullName>Phthiocerol/phthiodiolone dimycocerosyl transferase</fullName>
        <ecNumber evidence="2">2.3.1.282</ecNumber>
    </recommendedName>
    <alternativeName>
        <fullName>Acyltransferase PapA5</fullName>
    </alternativeName>
    <alternativeName>
        <fullName>Phthiocerol/phthiodiolone O-acyltransferase</fullName>
    </alternativeName>
    <alternativeName>
        <fullName>Polyketide synthase-associated protein A5</fullName>
    </alternativeName>
</protein>
<gene>
    <name type="primary">papA5</name>
    <name type="ordered locus">Mjls_2857</name>
</gene>
<keyword id="KW-0012">Acyltransferase</keyword>
<keyword id="KW-0444">Lipid biosynthesis</keyword>
<keyword id="KW-0443">Lipid metabolism</keyword>
<keyword id="KW-0808">Transferase</keyword>
<comment type="function">
    <text evidence="2">Catalyzes diesterification of phthiocerol, phthiodiolone, and phenolphthiocerol with mycocerosic acids, the final step in the phthiocerol, phthiodiolone and phenolphthiocerol dimycocerosate esters (PDIM) synthesis. Can directly transfer the mycocerosate bound to the mycocerosic acid synthase (mas) onto the substrate alcohols.</text>
</comment>
<comment type="catalytic activity">
    <reaction evidence="2">
        <text>2 a mycocerosyl-[mycocerosic acid synthase] + a phthiocerol = a dimycocerosyl phthiocerol + 2 holo-[mycocerosic acid synthase].</text>
        <dbReference type="EC" id="2.3.1.282"/>
    </reaction>
</comment>
<comment type="catalytic activity">
    <reaction evidence="2">
        <text>2 a mycocerosyl-[mycocerosic acid synthase] + a phthiodiolone = a dimycocerosyl phthiodiolone + 2 holo-[mycocerosic acid synthase].</text>
        <dbReference type="EC" id="2.3.1.282"/>
    </reaction>
</comment>
<comment type="catalytic activity">
    <reaction evidence="2">
        <text>2 a mycocerosyl-[mycocerosic acid synthase] + a phenolphthiocerol = a dimycocerosyl phenolphthiocerol + 2 holo-[mycocerosic acid synthase].</text>
        <dbReference type="EC" id="2.3.1.282"/>
    </reaction>
</comment>
<comment type="subunit">
    <text evidence="2">Monomer. Interacts directly with the acyl carrier protein (ACP) domain of the mycocerosic acid synthase (mas) protein.</text>
</comment>
<comment type="domain">
    <text evidence="2">Consists of two structural domains that are related to each other.</text>
</comment>
<comment type="similarity">
    <text evidence="3">Belongs to the acyltransferase PapA5 family.</text>
</comment>
<organism>
    <name type="scientific">Mycobacterium sp. (strain JLS)</name>
    <dbReference type="NCBI Taxonomy" id="164757"/>
    <lineage>
        <taxon>Bacteria</taxon>
        <taxon>Bacillati</taxon>
        <taxon>Actinomycetota</taxon>
        <taxon>Actinomycetes</taxon>
        <taxon>Mycobacteriales</taxon>
        <taxon>Mycobacteriaceae</taxon>
        <taxon>Mycobacterium</taxon>
    </lineage>
</organism>
<name>PAPA5_MYCSJ</name>
<proteinExistence type="inferred from homology"/>
<accession>A3Q0G0</accession>